<proteinExistence type="inferred from homology"/>
<sequence>MGIKLFKPTTPSRRNMSANTFEEITTDKPEKSLLVSLKRTGGRNSQGKITVRHRGGGAKRKYRIIDFKRDKDGIPAKVATIEYDPNRTAFIALVVYTDGEKRYIIAPQGLKVGDVIVSGPDADIKAGNCLPIKNIPVGTFVHNIELASGKGAQLVRSAGGSAQLMAKEGNYATIKLPSGETRYVRIECRATIGTVSNVKHEIMSIGKAGRKRKMGFRPTVRGSAMNPCDHPHGGGEGRTPIGMSSPVTPWGKPALGYKTRKTKKYSDRLIIKRKND</sequence>
<organism>
    <name type="scientific">Clostridium tetani (strain Massachusetts / E88)</name>
    <dbReference type="NCBI Taxonomy" id="212717"/>
    <lineage>
        <taxon>Bacteria</taxon>
        <taxon>Bacillati</taxon>
        <taxon>Bacillota</taxon>
        <taxon>Clostridia</taxon>
        <taxon>Eubacteriales</taxon>
        <taxon>Clostridiaceae</taxon>
        <taxon>Clostridium</taxon>
    </lineage>
</organism>
<keyword id="KW-1185">Reference proteome</keyword>
<keyword id="KW-0687">Ribonucleoprotein</keyword>
<keyword id="KW-0689">Ribosomal protein</keyword>
<keyword id="KW-0694">RNA-binding</keyword>
<keyword id="KW-0699">rRNA-binding</keyword>
<dbReference type="EMBL" id="AE015927">
    <property type="protein sequence ID" value="AAO37054.1"/>
    <property type="status" value="ALT_INIT"/>
    <property type="molecule type" value="Genomic_DNA"/>
</dbReference>
<dbReference type="RefSeq" id="WP_011100715.1">
    <property type="nucleotide sequence ID" value="NC_004557.1"/>
</dbReference>
<dbReference type="SMR" id="Q890P1"/>
<dbReference type="STRING" id="212717.CTC_02598"/>
<dbReference type="GeneID" id="24252572"/>
<dbReference type="KEGG" id="ctc:CTC_02598"/>
<dbReference type="HOGENOM" id="CLU_036235_2_1_9"/>
<dbReference type="OrthoDB" id="9778722at2"/>
<dbReference type="Proteomes" id="UP000001412">
    <property type="component" value="Chromosome"/>
</dbReference>
<dbReference type="GO" id="GO:0015934">
    <property type="term" value="C:large ribosomal subunit"/>
    <property type="evidence" value="ECO:0007669"/>
    <property type="project" value="InterPro"/>
</dbReference>
<dbReference type="GO" id="GO:0019843">
    <property type="term" value="F:rRNA binding"/>
    <property type="evidence" value="ECO:0007669"/>
    <property type="project" value="UniProtKB-UniRule"/>
</dbReference>
<dbReference type="GO" id="GO:0003735">
    <property type="term" value="F:structural constituent of ribosome"/>
    <property type="evidence" value="ECO:0007669"/>
    <property type="project" value="InterPro"/>
</dbReference>
<dbReference type="GO" id="GO:0016740">
    <property type="term" value="F:transferase activity"/>
    <property type="evidence" value="ECO:0007669"/>
    <property type="project" value="InterPro"/>
</dbReference>
<dbReference type="GO" id="GO:0002181">
    <property type="term" value="P:cytoplasmic translation"/>
    <property type="evidence" value="ECO:0007669"/>
    <property type="project" value="TreeGrafter"/>
</dbReference>
<dbReference type="FunFam" id="2.30.30.30:FF:000001">
    <property type="entry name" value="50S ribosomal protein L2"/>
    <property type="match status" value="1"/>
</dbReference>
<dbReference type="FunFam" id="2.40.50.140:FF:000003">
    <property type="entry name" value="50S ribosomal protein L2"/>
    <property type="match status" value="1"/>
</dbReference>
<dbReference type="FunFam" id="4.10.950.10:FF:000001">
    <property type="entry name" value="50S ribosomal protein L2"/>
    <property type="match status" value="1"/>
</dbReference>
<dbReference type="Gene3D" id="2.30.30.30">
    <property type="match status" value="1"/>
</dbReference>
<dbReference type="Gene3D" id="2.40.50.140">
    <property type="entry name" value="Nucleic acid-binding proteins"/>
    <property type="match status" value="1"/>
</dbReference>
<dbReference type="Gene3D" id="4.10.950.10">
    <property type="entry name" value="Ribosomal protein L2, domain 3"/>
    <property type="match status" value="1"/>
</dbReference>
<dbReference type="HAMAP" id="MF_01320_B">
    <property type="entry name" value="Ribosomal_uL2_B"/>
    <property type="match status" value="1"/>
</dbReference>
<dbReference type="InterPro" id="IPR012340">
    <property type="entry name" value="NA-bd_OB-fold"/>
</dbReference>
<dbReference type="InterPro" id="IPR014722">
    <property type="entry name" value="Rib_uL2_dom2"/>
</dbReference>
<dbReference type="InterPro" id="IPR002171">
    <property type="entry name" value="Ribosomal_uL2"/>
</dbReference>
<dbReference type="InterPro" id="IPR005880">
    <property type="entry name" value="Ribosomal_uL2_bac/org-type"/>
</dbReference>
<dbReference type="InterPro" id="IPR022669">
    <property type="entry name" value="Ribosomal_uL2_C"/>
</dbReference>
<dbReference type="InterPro" id="IPR022671">
    <property type="entry name" value="Ribosomal_uL2_CS"/>
</dbReference>
<dbReference type="InterPro" id="IPR014726">
    <property type="entry name" value="Ribosomal_uL2_dom3"/>
</dbReference>
<dbReference type="InterPro" id="IPR022666">
    <property type="entry name" value="Ribosomal_uL2_RNA-bd_dom"/>
</dbReference>
<dbReference type="InterPro" id="IPR008991">
    <property type="entry name" value="Translation_prot_SH3-like_sf"/>
</dbReference>
<dbReference type="NCBIfam" id="TIGR01171">
    <property type="entry name" value="rplB_bact"/>
    <property type="match status" value="1"/>
</dbReference>
<dbReference type="PANTHER" id="PTHR13691:SF5">
    <property type="entry name" value="LARGE RIBOSOMAL SUBUNIT PROTEIN UL2M"/>
    <property type="match status" value="1"/>
</dbReference>
<dbReference type="PANTHER" id="PTHR13691">
    <property type="entry name" value="RIBOSOMAL PROTEIN L2"/>
    <property type="match status" value="1"/>
</dbReference>
<dbReference type="Pfam" id="PF00181">
    <property type="entry name" value="Ribosomal_L2"/>
    <property type="match status" value="1"/>
</dbReference>
<dbReference type="Pfam" id="PF03947">
    <property type="entry name" value="Ribosomal_L2_C"/>
    <property type="match status" value="1"/>
</dbReference>
<dbReference type="PIRSF" id="PIRSF002158">
    <property type="entry name" value="Ribosomal_L2"/>
    <property type="match status" value="1"/>
</dbReference>
<dbReference type="SMART" id="SM01383">
    <property type="entry name" value="Ribosomal_L2"/>
    <property type="match status" value="1"/>
</dbReference>
<dbReference type="SMART" id="SM01382">
    <property type="entry name" value="Ribosomal_L2_C"/>
    <property type="match status" value="1"/>
</dbReference>
<dbReference type="SUPFAM" id="SSF50249">
    <property type="entry name" value="Nucleic acid-binding proteins"/>
    <property type="match status" value="1"/>
</dbReference>
<dbReference type="SUPFAM" id="SSF50104">
    <property type="entry name" value="Translation proteins SH3-like domain"/>
    <property type="match status" value="1"/>
</dbReference>
<dbReference type="PROSITE" id="PS00467">
    <property type="entry name" value="RIBOSOMAL_L2"/>
    <property type="match status" value="1"/>
</dbReference>
<reference key="1">
    <citation type="journal article" date="2003" name="Proc. Natl. Acad. Sci. U.S.A.">
        <title>The genome sequence of Clostridium tetani, the causative agent of tetanus disease.</title>
        <authorList>
            <person name="Brueggemann H."/>
            <person name="Baeumer S."/>
            <person name="Fricke W.F."/>
            <person name="Wiezer A."/>
            <person name="Liesegang H."/>
            <person name="Decker I."/>
            <person name="Herzberg C."/>
            <person name="Martinez-Arias R."/>
            <person name="Merkl R."/>
            <person name="Henne A."/>
            <person name="Gottschalk G."/>
        </authorList>
    </citation>
    <scope>NUCLEOTIDE SEQUENCE [LARGE SCALE GENOMIC DNA]</scope>
    <source>
        <strain>Massachusetts / E88</strain>
    </source>
</reference>
<feature type="chain" id="PRO_0000129553" description="Large ribosomal subunit protein uL2">
    <location>
        <begin position="1"/>
        <end position="276"/>
    </location>
</feature>
<feature type="region of interest" description="Disordered" evidence="2">
    <location>
        <begin position="218"/>
        <end position="255"/>
    </location>
</feature>
<gene>
    <name evidence="1" type="primary">rplB</name>
    <name type="ordered locus">CTC_02598</name>
</gene>
<protein>
    <recommendedName>
        <fullName evidence="1">Large ribosomal subunit protein uL2</fullName>
    </recommendedName>
    <alternativeName>
        <fullName evidence="3">50S ribosomal protein L2</fullName>
    </alternativeName>
</protein>
<name>RL2_CLOTE</name>
<evidence type="ECO:0000255" key="1">
    <source>
        <dbReference type="HAMAP-Rule" id="MF_01320"/>
    </source>
</evidence>
<evidence type="ECO:0000256" key="2">
    <source>
        <dbReference type="SAM" id="MobiDB-lite"/>
    </source>
</evidence>
<evidence type="ECO:0000305" key="3"/>
<comment type="function">
    <text evidence="1">One of the primary rRNA binding proteins. Required for association of the 30S and 50S subunits to form the 70S ribosome, for tRNA binding and peptide bond formation. It has been suggested to have peptidyltransferase activity; this is somewhat controversial. Makes several contacts with the 16S rRNA in the 70S ribosome.</text>
</comment>
<comment type="subunit">
    <text evidence="1">Part of the 50S ribosomal subunit. Forms a bridge to the 30S subunit in the 70S ribosome.</text>
</comment>
<comment type="similarity">
    <text evidence="1">Belongs to the universal ribosomal protein uL2 family.</text>
</comment>
<comment type="sequence caution" evidence="3">
    <conflict type="erroneous initiation">
        <sequence resource="EMBL-CDS" id="AAO37054"/>
    </conflict>
</comment>
<accession>Q890P1</accession>